<organism>
    <name type="scientific">Homo sapiens</name>
    <name type="common">Human</name>
    <dbReference type="NCBI Taxonomy" id="9606"/>
    <lineage>
        <taxon>Eukaryota</taxon>
        <taxon>Metazoa</taxon>
        <taxon>Chordata</taxon>
        <taxon>Craniata</taxon>
        <taxon>Vertebrata</taxon>
        <taxon>Euteleostomi</taxon>
        <taxon>Mammalia</taxon>
        <taxon>Eutheria</taxon>
        <taxon>Euarchontoglires</taxon>
        <taxon>Primates</taxon>
        <taxon>Haplorrhini</taxon>
        <taxon>Catarrhini</taxon>
        <taxon>Hominidae</taxon>
        <taxon>Homo</taxon>
    </lineage>
</organism>
<evidence type="ECO:0000250" key="1"/>
<evidence type="ECO:0000250" key="2">
    <source>
        <dbReference type="UniProtKB" id="P80318"/>
    </source>
</evidence>
<evidence type="ECO:0000256" key="3">
    <source>
        <dbReference type="SAM" id="MobiDB-lite"/>
    </source>
</evidence>
<evidence type="ECO:0000269" key="4">
    <source>
    </source>
</evidence>
<evidence type="ECO:0000269" key="5">
    <source>
    </source>
</evidence>
<evidence type="ECO:0000269" key="6">
    <source>
    </source>
</evidence>
<evidence type="ECO:0000269" key="7">
    <source>
    </source>
</evidence>
<evidence type="ECO:0000269" key="8">
    <source>
    </source>
</evidence>
<evidence type="ECO:0000269" key="9">
    <source>
    </source>
</evidence>
<evidence type="ECO:0000269" key="10">
    <source>
    </source>
</evidence>
<evidence type="ECO:0000269" key="11">
    <source>
    </source>
</evidence>
<evidence type="ECO:0000269" key="12">
    <source ref="5"/>
</evidence>
<evidence type="ECO:0000303" key="13">
    <source>
    </source>
</evidence>
<evidence type="ECO:0000305" key="14"/>
<evidence type="ECO:0000305" key="15">
    <source>
    </source>
</evidence>
<evidence type="ECO:0000305" key="16">
    <source>
    </source>
</evidence>
<evidence type="ECO:0000305" key="17">
    <source>
    </source>
</evidence>
<evidence type="ECO:0007744" key="18">
    <source>
        <dbReference type="PDB" id="7NVL"/>
    </source>
</evidence>
<evidence type="ECO:0007744" key="19">
    <source>
        <dbReference type="PDB" id="7NVM"/>
    </source>
</evidence>
<evidence type="ECO:0007744" key="20">
    <source>
        <dbReference type="PDB" id="7NVN"/>
    </source>
</evidence>
<evidence type="ECO:0007744" key="21">
    <source>
        <dbReference type="PDB" id="7NVO"/>
    </source>
</evidence>
<evidence type="ECO:0007744" key="22">
    <source>
        <dbReference type="PDB" id="7TRG"/>
    </source>
</evidence>
<evidence type="ECO:0007744" key="23">
    <source>
        <dbReference type="PDB" id="7TTN"/>
    </source>
</evidence>
<evidence type="ECO:0007744" key="24">
    <source>
        <dbReference type="PDB" id="7TTT"/>
    </source>
</evidence>
<evidence type="ECO:0007744" key="25">
    <source>
        <dbReference type="PDB" id="7TUB"/>
    </source>
</evidence>
<evidence type="ECO:0007744" key="26">
    <source>
        <dbReference type="PDB" id="7WU7"/>
    </source>
</evidence>
<evidence type="ECO:0007744" key="27">
    <source>
        <dbReference type="PDB" id="7WZ3"/>
    </source>
</evidence>
<evidence type="ECO:0007744" key="28">
    <source>
        <dbReference type="PDB" id="7X0A"/>
    </source>
</evidence>
<evidence type="ECO:0007744" key="29">
    <source>
        <dbReference type="PDB" id="7X0S"/>
    </source>
</evidence>
<evidence type="ECO:0007744" key="30">
    <source>
        <dbReference type="PDB" id="7X0V"/>
    </source>
</evidence>
<evidence type="ECO:0007744" key="31">
    <source>
        <dbReference type="PDB" id="7X3J"/>
    </source>
</evidence>
<evidence type="ECO:0007744" key="32">
    <source>
        <dbReference type="PDB" id="7X3U"/>
    </source>
</evidence>
<evidence type="ECO:0007744" key="33">
    <source>
        <dbReference type="PDB" id="7X6Q"/>
    </source>
</evidence>
<evidence type="ECO:0007744" key="34">
    <source>
        <dbReference type="PDB" id="7X7Y"/>
    </source>
</evidence>
<evidence type="ECO:0007744" key="35">
    <source>
    </source>
</evidence>
<evidence type="ECO:0007744" key="36">
    <source>
    </source>
</evidence>
<evidence type="ECO:0007744" key="37">
    <source>
    </source>
</evidence>
<evidence type="ECO:0007744" key="38">
    <source>
    </source>
</evidence>
<evidence type="ECO:0007744" key="39">
    <source>
    </source>
</evidence>
<evidence type="ECO:0007744" key="40">
    <source>
    </source>
</evidence>
<evidence type="ECO:0007744" key="41">
    <source>
    </source>
</evidence>
<evidence type="ECO:0007744" key="42">
    <source>
    </source>
</evidence>
<evidence type="ECO:0007829" key="43">
    <source>
        <dbReference type="PDB" id="7NVL"/>
    </source>
</evidence>
<evidence type="ECO:0007829" key="44">
    <source>
        <dbReference type="PDB" id="7TRG"/>
    </source>
</evidence>
<evidence type="ECO:0007829" key="45">
    <source>
        <dbReference type="PDB" id="7TTT"/>
    </source>
</evidence>
<evidence type="ECO:0007829" key="46">
    <source>
        <dbReference type="PDB" id="7X0A"/>
    </source>
</evidence>
<evidence type="ECO:0007829" key="47">
    <source>
        <dbReference type="PDB" id="8I9U"/>
    </source>
</evidence>
<evidence type="ECO:0007829" key="48">
    <source>
        <dbReference type="PDB" id="8SGC"/>
    </source>
</evidence>
<evidence type="ECO:0007829" key="49">
    <source>
        <dbReference type="PDB" id="8SH9"/>
    </source>
</evidence>
<evidence type="ECO:0007829" key="50">
    <source>
        <dbReference type="PDB" id="8SHT"/>
    </source>
</evidence>
<comment type="function">
    <text evidence="5 6 8 9 10">Component of the chaperonin-containing T-complex (TRiC), a molecular chaperone complex that assists the folding of actin, tubulin and other proteins upon ATP hydrolysis (PubMed:25467444, PubMed:36493755, PubMed:35449234, PubMed:37193829). The TRiC complex mediates the folding of WRAP53/TCAB1, thereby regulating telomere maintenance (PubMed:25467444). As part of the TRiC complex may play a role in the assembly of BBSome, a complex involved in ciliogenesis regulating transports vesicles to the cilia (PubMed:20080638).</text>
</comment>
<comment type="catalytic activity">
    <reaction evidence="15 16 17">
        <text>ATP + H2O = ADP + phosphate + H(+)</text>
        <dbReference type="Rhea" id="RHEA:13065"/>
        <dbReference type="ChEBI" id="CHEBI:15377"/>
        <dbReference type="ChEBI" id="CHEBI:15378"/>
        <dbReference type="ChEBI" id="CHEBI:30616"/>
        <dbReference type="ChEBI" id="CHEBI:43474"/>
        <dbReference type="ChEBI" id="CHEBI:456216"/>
    </reaction>
</comment>
<comment type="subunit">
    <text evidence="2 4 5 6 7 8 9 10">Component of the chaperonin-containing T-complex (TRiC), a hexadecamer composed of two identical back-to-back stacked rings enclosing a protein folding chamber (PubMed:20080638, PubMed:25467444, PubMed:36493755, PubMed:35449234, PubMed:37193829). Each ring is made up of eight different subunits: TCP1/CCT1, CCT2, CCT3, CCT4, CCT5, CCT6A/CCT6, CCT7, CCT8 (PubMed:36493755, PubMed:35449234, PubMed:37193829). Interacts with PACRG (PubMed:14532270). Interacts with DNAAF4 (By similarity). Interacts with DLEC1 (PubMed:33144677).</text>
</comment>
<comment type="interaction">
    <interactant intactId="EBI-356673">
        <id>P49368</id>
    </interactant>
    <interactant intactId="EBI-12366971">
        <id>O75140-2</id>
        <label>DEPDC5</label>
    </interactant>
    <organismsDiffer>false</organismsDiffer>
    <experiments>3</experiments>
</comment>
<comment type="interaction">
    <interactant intactId="EBI-356673">
        <id>P49368</id>
    </interactant>
    <interactant intactId="EBI-923794">
        <id>O75530</id>
        <label>EED</label>
    </interactant>
    <organismsDiffer>false</organismsDiffer>
    <experiments>2</experiments>
</comment>
<comment type="interaction">
    <interactant intactId="EBI-356673">
        <id>P49368</id>
    </interactant>
    <interactant intactId="EBI-356700">
        <id>P57678</id>
        <label>GEMIN4</label>
    </interactant>
    <organismsDiffer>false</organismsDiffer>
    <experiments>3</experiments>
</comment>
<comment type="interaction">
    <interactant intactId="EBI-356673">
        <id>P49368</id>
    </interactant>
    <interactant intactId="EBI-2548751">
        <id>Q8TD10</id>
        <label>MIPOL1</label>
    </interactant>
    <organismsDiffer>false</organismsDiffer>
    <experiments>6</experiments>
</comment>
<comment type="interaction">
    <interactant intactId="EBI-356673">
        <id>P49368</id>
    </interactant>
    <interactant intactId="EBI-5772890">
        <id>Q13371</id>
        <label>PDCL</label>
    </interactant>
    <organismsDiffer>false</organismsDiffer>
    <experiments>9</experiments>
</comment>
<comment type="interaction">
    <interactant intactId="EBI-356673">
        <id>P49368</id>
    </interactant>
    <interactant intactId="EBI-1055079">
        <id>O15160</id>
        <label>POLR1C</label>
    </interactant>
    <organismsDiffer>false</organismsDiffer>
    <experiments>3</experiments>
</comment>
<comment type="interaction">
    <interactant intactId="EBI-356673">
        <id>P49368</id>
    </interactant>
    <interactant intactId="EBI-365996">
        <id>P04049</id>
        <label>RAF1</label>
    </interactant>
    <organismsDiffer>false</organismsDiffer>
    <experiments>8</experiments>
</comment>
<comment type="interaction">
    <interactant intactId="EBI-356673">
        <id>P49368</id>
    </interactant>
    <interactant intactId="EBI-720977">
        <id>Q9H832</id>
        <label>UBE2Z</label>
    </interactant>
    <organismsDiffer>false</organismsDiffer>
    <experiments>3</experiments>
</comment>
<comment type="interaction">
    <interactant intactId="EBI-356673">
        <id>P49368</id>
    </interactant>
    <interactant intactId="EBI-741415">
        <id>O60232</id>
        <label>ZNRD2</label>
    </interactant>
    <organismsDiffer>false</organismsDiffer>
    <experiments>6</experiments>
</comment>
<comment type="subcellular location">
    <subcellularLocation>
        <location evidence="14">Cytoplasm</location>
    </subcellularLocation>
</comment>
<comment type="alternative products">
    <event type="alternative splicing"/>
    <isoform>
        <id>P49368-1</id>
        <name>1</name>
        <sequence type="displayed"/>
    </isoform>
    <isoform>
        <id>P49368-2</id>
        <name>2</name>
        <sequence type="described" ref="VSP_042026"/>
    </isoform>
</comment>
<comment type="disease" evidence="11">
    <disease id="DI-06983">
        <name>Neurodevelopmental disorder with speech or visual impairment and brain hypomyelination</name>
        <acronym>NEDSVH</acronym>
        <description>An autosomal dominant disorder characterized by global developmental delay, impaired intellectual development, poor or absent speech, and brain abnormalities including hypomyelination, cerebellar atrophy, and optic nerve atrophy. Some patients have severe visual impairment, dystonic movements, and seizures.</description>
        <dbReference type="MIM" id="621034"/>
    </disease>
    <text>The disease is caused by variants affecting the gene represented in this entry.</text>
</comment>
<comment type="similarity">
    <text evidence="14">Belongs to the TCP-1 chaperonin family.</text>
</comment>
<comment type="sequence caution" evidence="14">
    <conflict type="erroneous initiation">
        <sequence resource="EMBL-CDS" id="AAH08019"/>
    </conflict>
</comment>
<gene>
    <name type="primary">CCT3</name>
    <name type="synonym">CCTG</name>
    <name type="synonym">TRIC5</name>
</gene>
<reference key="1">
    <citation type="journal article" date="2004" name="Nat. Genet.">
        <title>Complete sequencing and characterization of 21,243 full-length human cDNAs.</title>
        <authorList>
            <person name="Ota T."/>
            <person name="Suzuki Y."/>
            <person name="Nishikawa T."/>
            <person name="Otsuki T."/>
            <person name="Sugiyama T."/>
            <person name="Irie R."/>
            <person name="Wakamatsu A."/>
            <person name="Hayashi K."/>
            <person name="Sato H."/>
            <person name="Nagai K."/>
            <person name="Kimura K."/>
            <person name="Makita H."/>
            <person name="Sekine M."/>
            <person name="Obayashi M."/>
            <person name="Nishi T."/>
            <person name="Shibahara T."/>
            <person name="Tanaka T."/>
            <person name="Ishii S."/>
            <person name="Yamamoto J."/>
            <person name="Saito K."/>
            <person name="Kawai Y."/>
            <person name="Isono Y."/>
            <person name="Nakamura Y."/>
            <person name="Nagahari K."/>
            <person name="Murakami K."/>
            <person name="Yasuda T."/>
            <person name="Iwayanagi T."/>
            <person name="Wagatsuma M."/>
            <person name="Shiratori A."/>
            <person name="Sudo H."/>
            <person name="Hosoiri T."/>
            <person name="Kaku Y."/>
            <person name="Kodaira H."/>
            <person name="Kondo H."/>
            <person name="Sugawara M."/>
            <person name="Takahashi M."/>
            <person name="Kanda K."/>
            <person name="Yokoi T."/>
            <person name="Furuya T."/>
            <person name="Kikkawa E."/>
            <person name="Omura Y."/>
            <person name="Abe K."/>
            <person name="Kamihara K."/>
            <person name="Katsuta N."/>
            <person name="Sato K."/>
            <person name="Tanikawa M."/>
            <person name="Yamazaki M."/>
            <person name="Ninomiya K."/>
            <person name="Ishibashi T."/>
            <person name="Yamashita H."/>
            <person name="Murakawa K."/>
            <person name="Fujimori K."/>
            <person name="Tanai H."/>
            <person name="Kimata M."/>
            <person name="Watanabe M."/>
            <person name="Hiraoka S."/>
            <person name="Chiba Y."/>
            <person name="Ishida S."/>
            <person name="Ono Y."/>
            <person name="Takiguchi S."/>
            <person name="Watanabe S."/>
            <person name="Yosida M."/>
            <person name="Hotuta T."/>
            <person name="Kusano J."/>
            <person name="Kanehori K."/>
            <person name="Takahashi-Fujii A."/>
            <person name="Hara H."/>
            <person name="Tanase T.-O."/>
            <person name="Nomura Y."/>
            <person name="Togiya S."/>
            <person name="Komai F."/>
            <person name="Hara R."/>
            <person name="Takeuchi K."/>
            <person name="Arita M."/>
            <person name="Imose N."/>
            <person name="Musashino K."/>
            <person name="Yuuki H."/>
            <person name="Oshima A."/>
            <person name="Sasaki N."/>
            <person name="Aotsuka S."/>
            <person name="Yoshikawa Y."/>
            <person name="Matsunawa H."/>
            <person name="Ichihara T."/>
            <person name="Shiohata N."/>
            <person name="Sano S."/>
            <person name="Moriya S."/>
            <person name="Momiyama H."/>
            <person name="Satoh N."/>
            <person name="Takami S."/>
            <person name="Terashima Y."/>
            <person name="Suzuki O."/>
            <person name="Nakagawa S."/>
            <person name="Senoh A."/>
            <person name="Mizoguchi H."/>
            <person name="Goto Y."/>
            <person name="Shimizu F."/>
            <person name="Wakebe H."/>
            <person name="Hishigaki H."/>
            <person name="Watanabe T."/>
            <person name="Sugiyama A."/>
            <person name="Takemoto M."/>
            <person name="Kawakami B."/>
            <person name="Yamazaki M."/>
            <person name="Watanabe K."/>
            <person name="Kumagai A."/>
            <person name="Itakura S."/>
            <person name="Fukuzumi Y."/>
            <person name="Fujimori Y."/>
            <person name="Komiyama M."/>
            <person name="Tashiro H."/>
            <person name="Tanigami A."/>
            <person name="Fujiwara T."/>
            <person name="Ono T."/>
            <person name="Yamada K."/>
            <person name="Fujii Y."/>
            <person name="Ozaki K."/>
            <person name="Hirao M."/>
            <person name="Ohmori Y."/>
            <person name="Kawabata A."/>
            <person name="Hikiji T."/>
            <person name="Kobatake N."/>
            <person name="Inagaki H."/>
            <person name="Ikema Y."/>
            <person name="Okamoto S."/>
            <person name="Okitani R."/>
            <person name="Kawakami T."/>
            <person name="Noguchi S."/>
            <person name="Itoh T."/>
            <person name="Shigeta K."/>
            <person name="Senba T."/>
            <person name="Matsumura K."/>
            <person name="Nakajima Y."/>
            <person name="Mizuno T."/>
            <person name="Morinaga M."/>
            <person name="Sasaki M."/>
            <person name="Togashi T."/>
            <person name="Oyama M."/>
            <person name="Hata H."/>
            <person name="Watanabe M."/>
            <person name="Komatsu T."/>
            <person name="Mizushima-Sugano J."/>
            <person name="Satoh T."/>
            <person name="Shirai Y."/>
            <person name="Takahashi Y."/>
            <person name="Nakagawa K."/>
            <person name="Okumura K."/>
            <person name="Nagase T."/>
            <person name="Nomura N."/>
            <person name="Kikuchi H."/>
            <person name="Masuho Y."/>
            <person name="Yamashita R."/>
            <person name="Nakai K."/>
            <person name="Yada T."/>
            <person name="Nakamura Y."/>
            <person name="Ohara O."/>
            <person name="Isogai T."/>
            <person name="Sugano S."/>
        </authorList>
    </citation>
    <scope>NUCLEOTIDE SEQUENCE [LARGE SCALE MRNA] (ISOFORM 2)</scope>
    <source>
        <tissue>Cerebellum</tissue>
    </source>
</reference>
<reference key="2">
    <citation type="journal article" date="2007" name="BMC Genomics">
        <title>The full-ORF clone resource of the German cDNA consortium.</title>
        <authorList>
            <person name="Bechtel S."/>
            <person name="Rosenfelder H."/>
            <person name="Duda A."/>
            <person name="Schmidt C.P."/>
            <person name="Ernst U."/>
            <person name="Wellenreuther R."/>
            <person name="Mehrle A."/>
            <person name="Schuster C."/>
            <person name="Bahr A."/>
            <person name="Bloecker H."/>
            <person name="Heubner D."/>
            <person name="Hoerlein A."/>
            <person name="Michel G."/>
            <person name="Wedler H."/>
            <person name="Koehrer K."/>
            <person name="Ottenwaelder B."/>
            <person name="Poustka A."/>
            <person name="Wiemann S."/>
            <person name="Schupp I."/>
        </authorList>
    </citation>
    <scope>NUCLEOTIDE SEQUENCE [LARGE SCALE MRNA] (ISOFORM 1)</scope>
    <source>
        <tissue>Lymph node</tissue>
    </source>
</reference>
<reference key="3">
    <citation type="journal article" date="2006" name="Nature">
        <title>The DNA sequence and biological annotation of human chromosome 1.</title>
        <authorList>
            <person name="Gregory S.G."/>
            <person name="Barlow K.F."/>
            <person name="McLay K.E."/>
            <person name="Kaul R."/>
            <person name="Swarbreck D."/>
            <person name="Dunham A."/>
            <person name="Scott C.E."/>
            <person name="Howe K.L."/>
            <person name="Woodfine K."/>
            <person name="Spencer C.C.A."/>
            <person name="Jones M.C."/>
            <person name="Gillson C."/>
            <person name="Searle S."/>
            <person name="Zhou Y."/>
            <person name="Kokocinski F."/>
            <person name="McDonald L."/>
            <person name="Evans R."/>
            <person name="Phillips K."/>
            <person name="Atkinson A."/>
            <person name="Cooper R."/>
            <person name="Jones C."/>
            <person name="Hall R.E."/>
            <person name="Andrews T.D."/>
            <person name="Lloyd C."/>
            <person name="Ainscough R."/>
            <person name="Almeida J.P."/>
            <person name="Ambrose K.D."/>
            <person name="Anderson F."/>
            <person name="Andrew R.W."/>
            <person name="Ashwell R.I.S."/>
            <person name="Aubin K."/>
            <person name="Babbage A.K."/>
            <person name="Bagguley C.L."/>
            <person name="Bailey J."/>
            <person name="Beasley H."/>
            <person name="Bethel G."/>
            <person name="Bird C.P."/>
            <person name="Bray-Allen S."/>
            <person name="Brown J.Y."/>
            <person name="Brown A.J."/>
            <person name="Buckley D."/>
            <person name="Burton J."/>
            <person name="Bye J."/>
            <person name="Carder C."/>
            <person name="Chapman J.C."/>
            <person name="Clark S.Y."/>
            <person name="Clarke G."/>
            <person name="Clee C."/>
            <person name="Cobley V."/>
            <person name="Collier R.E."/>
            <person name="Corby N."/>
            <person name="Coville G.J."/>
            <person name="Davies J."/>
            <person name="Deadman R."/>
            <person name="Dunn M."/>
            <person name="Earthrowl M."/>
            <person name="Ellington A.G."/>
            <person name="Errington H."/>
            <person name="Frankish A."/>
            <person name="Frankland J."/>
            <person name="French L."/>
            <person name="Garner P."/>
            <person name="Garnett J."/>
            <person name="Gay L."/>
            <person name="Ghori M.R.J."/>
            <person name="Gibson R."/>
            <person name="Gilby L.M."/>
            <person name="Gillett W."/>
            <person name="Glithero R.J."/>
            <person name="Grafham D.V."/>
            <person name="Griffiths C."/>
            <person name="Griffiths-Jones S."/>
            <person name="Grocock R."/>
            <person name="Hammond S."/>
            <person name="Harrison E.S.I."/>
            <person name="Hart E."/>
            <person name="Haugen E."/>
            <person name="Heath P.D."/>
            <person name="Holmes S."/>
            <person name="Holt K."/>
            <person name="Howden P.J."/>
            <person name="Hunt A.R."/>
            <person name="Hunt S.E."/>
            <person name="Hunter G."/>
            <person name="Isherwood J."/>
            <person name="James R."/>
            <person name="Johnson C."/>
            <person name="Johnson D."/>
            <person name="Joy A."/>
            <person name="Kay M."/>
            <person name="Kershaw J.K."/>
            <person name="Kibukawa M."/>
            <person name="Kimberley A.M."/>
            <person name="King A."/>
            <person name="Knights A.J."/>
            <person name="Lad H."/>
            <person name="Laird G."/>
            <person name="Lawlor S."/>
            <person name="Leongamornlert D.A."/>
            <person name="Lloyd D.M."/>
            <person name="Loveland J."/>
            <person name="Lovell J."/>
            <person name="Lush M.J."/>
            <person name="Lyne R."/>
            <person name="Martin S."/>
            <person name="Mashreghi-Mohammadi M."/>
            <person name="Matthews L."/>
            <person name="Matthews N.S.W."/>
            <person name="McLaren S."/>
            <person name="Milne S."/>
            <person name="Mistry S."/>
            <person name="Moore M.J.F."/>
            <person name="Nickerson T."/>
            <person name="O'Dell C.N."/>
            <person name="Oliver K."/>
            <person name="Palmeiri A."/>
            <person name="Palmer S.A."/>
            <person name="Parker A."/>
            <person name="Patel D."/>
            <person name="Pearce A.V."/>
            <person name="Peck A.I."/>
            <person name="Pelan S."/>
            <person name="Phelps K."/>
            <person name="Phillimore B.J."/>
            <person name="Plumb R."/>
            <person name="Rajan J."/>
            <person name="Raymond C."/>
            <person name="Rouse G."/>
            <person name="Saenphimmachak C."/>
            <person name="Sehra H.K."/>
            <person name="Sheridan E."/>
            <person name="Shownkeen R."/>
            <person name="Sims S."/>
            <person name="Skuce C.D."/>
            <person name="Smith M."/>
            <person name="Steward C."/>
            <person name="Subramanian S."/>
            <person name="Sycamore N."/>
            <person name="Tracey A."/>
            <person name="Tromans A."/>
            <person name="Van Helmond Z."/>
            <person name="Wall M."/>
            <person name="Wallis J.M."/>
            <person name="White S."/>
            <person name="Whitehead S.L."/>
            <person name="Wilkinson J.E."/>
            <person name="Willey D.L."/>
            <person name="Williams H."/>
            <person name="Wilming L."/>
            <person name="Wray P.W."/>
            <person name="Wu Z."/>
            <person name="Coulson A."/>
            <person name="Vaudin M."/>
            <person name="Sulston J.E."/>
            <person name="Durbin R.M."/>
            <person name="Hubbard T."/>
            <person name="Wooster R."/>
            <person name="Dunham I."/>
            <person name="Carter N.P."/>
            <person name="McVean G."/>
            <person name="Ross M.T."/>
            <person name="Harrow J."/>
            <person name="Olson M.V."/>
            <person name="Beck S."/>
            <person name="Rogers J."/>
            <person name="Bentley D.R."/>
        </authorList>
    </citation>
    <scope>NUCLEOTIDE SEQUENCE [LARGE SCALE GENOMIC DNA]</scope>
</reference>
<reference key="4">
    <citation type="journal article" date="2004" name="Genome Res.">
        <title>The status, quality, and expansion of the NIH full-length cDNA project: the Mammalian Gene Collection (MGC).</title>
        <authorList>
            <consortium name="The MGC Project Team"/>
        </authorList>
    </citation>
    <scope>NUCLEOTIDE SEQUENCE [LARGE SCALE MRNA] (ISOFORM 1)</scope>
    <source>
        <tissue>Lung</tissue>
    </source>
</reference>
<reference key="5">
    <citation type="submission" date="2007-07" db="UniProtKB">
        <authorList>
            <person name="Bienvenut W.V."/>
            <person name="Boldt K."/>
            <person name="von Kriegsheim A.F."/>
            <person name="Kolch W."/>
        </authorList>
    </citation>
    <scope>PROTEIN SEQUENCE OF 1-15; 32-38; 49-85; 129-138; 182-191; 238-248; 295-306; 382-389; 428-449 AND 508-528</scope>
    <scope>ACETYLATION AT MET-1</scope>
    <scope>IDENTIFICATION BY MASS SPECTROMETRY</scope>
    <source>
        <tissue>Hepatoma</tissue>
    </source>
</reference>
<reference key="6">
    <citation type="journal article" date="1996" name="Biochem. J.">
        <title>Cloning, structure and mRNA expression of human Cctg, which encodes the chaperonin subunit CCT gamma.</title>
        <authorList>
            <person name="Walkley N.A."/>
            <person name="Demaine A.G."/>
            <person name="Malik A.N."/>
        </authorList>
    </citation>
    <scope>NUCLEOTIDE SEQUENCE [MRNA] OF 2-545</scope>
    <source>
        <tissue>Kidney</tissue>
    </source>
</reference>
<reference key="7">
    <citation type="submission" date="2007-03" db="UniProtKB">
        <authorList>
            <person name="Lubec G."/>
            <person name="Vishwanath V."/>
        </authorList>
    </citation>
    <scope>PROTEIN SEQUENCE OF 204-216; 331-353 AND 508-518</scope>
    <scope>IDENTIFICATION BY MASS SPECTROMETRY</scope>
    <source>
        <tissue>Brain</tissue>
        <tissue>Cajal-Retzius cell</tissue>
    </source>
</reference>
<reference key="8">
    <citation type="journal article" date="1994" name="Genomics">
        <title>Assignment of the human homologue of the mTRiC-P5 gene (TRIC5) to band 1q23 by fluorescence in situ hybridization.</title>
        <authorList>
            <person name="Sevigny G."/>
            <person name="Joly E."/>
            <person name="Bibor-Hardy V."/>
            <person name="Lemieux N."/>
        </authorList>
    </citation>
    <scope>NUCLEOTIDE SEQUENCE [MRNA] OF 345-544</scope>
</reference>
<reference key="9">
    <citation type="journal article" date="2003" name="J. Biol. Chem.">
        <title>A product of the human gene adjacent to parkin is a component of Lewy bodies and suppresses Pael receptor-induced cell death.</title>
        <authorList>
            <person name="Imai Y."/>
            <person name="Soda M."/>
            <person name="Murakami T."/>
            <person name="Shoji M."/>
            <person name="Abe K."/>
            <person name="Takahashi R."/>
        </authorList>
    </citation>
    <scope>INTERACTION WITH PACRG</scope>
</reference>
<reference key="10">
    <citation type="journal article" date="2003" name="Nature">
        <title>Proteomic characterization of the human centrosome by protein correlation profiling.</title>
        <authorList>
            <person name="Andersen J.S."/>
            <person name="Wilkinson C.J."/>
            <person name="Mayor T."/>
            <person name="Mortensen P."/>
            <person name="Nigg E.A."/>
            <person name="Mann M."/>
        </authorList>
    </citation>
    <scope>IDENTIFICATION BY MASS SPECTROMETRY</scope>
    <source>
        <tissue>Lymphoblast</tissue>
    </source>
</reference>
<reference key="11">
    <citation type="journal article" date="2009" name="Anal. Chem.">
        <title>Lys-N and trypsin cover complementary parts of the phosphoproteome in a refined SCX-based approach.</title>
        <authorList>
            <person name="Gauci S."/>
            <person name="Helbig A.O."/>
            <person name="Slijper M."/>
            <person name="Krijgsveld J."/>
            <person name="Heck A.J."/>
            <person name="Mohammed S."/>
        </authorList>
    </citation>
    <scope>ACETYLATION [LARGE SCALE ANALYSIS] AT MET-1</scope>
    <scope>IDENTIFICATION BY MASS SPECTROMETRY [LARGE SCALE ANALYSIS]</scope>
</reference>
<reference key="12">
    <citation type="journal article" date="2009" name="Sci. Signal.">
        <title>Quantitative phosphoproteomic analysis of T cell receptor signaling reveals system-wide modulation of protein-protein interactions.</title>
        <authorList>
            <person name="Mayya V."/>
            <person name="Lundgren D.H."/>
            <person name="Hwang S.-I."/>
            <person name="Rezaul K."/>
            <person name="Wu L."/>
            <person name="Eng J.K."/>
            <person name="Rodionov V."/>
            <person name="Han D.K."/>
        </authorList>
    </citation>
    <scope>PHOSPHORYLATION [LARGE SCALE ANALYSIS] AT SER-244</scope>
    <scope>IDENTIFICATION BY MASS SPECTROMETRY [LARGE SCALE ANALYSIS]</scope>
    <source>
        <tissue>Leukemic T-cell</tissue>
    </source>
</reference>
<reference key="13">
    <citation type="journal article" date="2009" name="Science">
        <title>Lysine acetylation targets protein complexes and co-regulates major cellular functions.</title>
        <authorList>
            <person name="Choudhary C."/>
            <person name="Kumar C."/>
            <person name="Gnad F."/>
            <person name="Nielsen M.L."/>
            <person name="Rehman M."/>
            <person name="Walther T.C."/>
            <person name="Olsen J.V."/>
            <person name="Mann M."/>
        </authorList>
    </citation>
    <scope>ACETYLATION [LARGE SCALE ANALYSIS] AT LYS-222</scope>
    <scope>IDENTIFICATION BY MASS SPECTROMETRY [LARGE SCALE ANALYSIS]</scope>
</reference>
<reference key="14">
    <citation type="journal article" date="2010" name="Proc. Natl. Acad. Sci. U.S.A.">
        <title>BBS6, BBS10, and BBS12 form a complex with CCT/TRiC family chaperonins and mediate BBSome assembly.</title>
        <authorList>
            <person name="Seo S."/>
            <person name="Baye L.M."/>
            <person name="Schulz N.P."/>
            <person name="Beck J.S."/>
            <person name="Zhang Q."/>
            <person name="Slusarski D.C."/>
            <person name="Sheffield V.C."/>
        </authorList>
    </citation>
    <scope>FUNCTION</scope>
    <scope>IDENTIFICATION IN THE CHAPERONIN-CONTAINING T-COMPLEX</scope>
</reference>
<reference key="15">
    <citation type="journal article" date="2011" name="BMC Syst. Biol.">
        <title>Initial characterization of the human central proteome.</title>
        <authorList>
            <person name="Burkard T.R."/>
            <person name="Planyavsky M."/>
            <person name="Kaupe I."/>
            <person name="Breitwieser F.P."/>
            <person name="Buerckstuemmer T."/>
            <person name="Bennett K.L."/>
            <person name="Superti-Furga G."/>
            <person name="Colinge J."/>
        </authorList>
    </citation>
    <scope>IDENTIFICATION BY MASS SPECTROMETRY [LARGE SCALE ANALYSIS]</scope>
</reference>
<reference key="16">
    <citation type="journal article" date="2011" name="Sci. Signal.">
        <title>System-wide temporal characterization of the proteome and phosphoproteome of human embryonic stem cell differentiation.</title>
        <authorList>
            <person name="Rigbolt K.T."/>
            <person name="Prokhorova T.A."/>
            <person name="Akimov V."/>
            <person name="Henningsen J."/>
            <person name="Johansen P.T."/>
            <person name="Kratchmarova I."/>
            <person name="Kassem M."/>
            <person name="Mann M."/>
            <person name="Olsen J.V."/>
            <person name="Blagoev B."/>
        </authorList>
    </citation>
    <scope>PHOSPHORYLATION [LARGE SCALE ANALYSIS] AT SER-252</scope>
    <scope>IDENTIFICATION BY MASS SPECTROMETRY [LARGE SCALE ANALYSIS]</scope>
</reference>
<reference key="17">
    <citation type="journal article" date="2014" name="Cell">
        <title>Proteostatic control of telomerase function through TRiC-mediated folding of TCAB1.</title>
        <authorList>
            <person name="Freund A."/>
            <person name="Zhong F.L."/>
            <person name="Venteicher A.S."/>
            <person name="Meng Z."/>
            <person name="Veenstra T.D."/>
            <person name="Frydman J."/>
            <person name="Artandi S.E."/>
        </authorList>
    </citation>
    <scope>FUNCTION</scope>
    <scope>IDENTIFICATION IN THE CHAPERONIN-CONTAINING T-COMPLEX</scope>
</reference>
<reference key="18">
    <citation type="journal article" date="2013" name="J. Proteome Res.">
        <title>Toward a comprehensive characterization of a human cancer cell phosphoproteome.</title>
        <authorList>
            <person name="Zhou H."/>
            <person name="Di Palma S."/>
            <person name="Preisinger C."/>
            <person name="Peng M."/>
            <person name="Polat A.N."/>
            <person name="Heck A.J."/>
            <person name="Mohammed S."/>
        </authorList>
    </citation>
    <scope>PHOSPHORYLATION [LARGE SCALE ANALYSIS] AT SER-11; SER-243; TYR-247; SER-252; THR-430 AND THR-459</scope>
    <scope>IDENTIFICATION BY MASS SPECTROMETRY [LARGE SCALE ANALYSIS]</scope>
    <source>
        <tissue>Cervix carcinoma</tissue>
        <tissue>Erythroleukemia</tissue>
    </source>
</reference>
<reference key="19">
    <citation type="journal article" date="2014" name="J. Proteomics">
        <title>An enzyme assisted RP-RPLC approach for in-depth analysis of human liver phosphoproteome.</title>
        <authorList>
            <person name="Bian Y."/>
            <person name="Song C."/>
            <person name="Cheng K."/>
            <person name="Dong M."/>
            <person name="Wang F."/>
            <person name="Huang J."/>
            <person name="Sun D."/>
            <person name="Wang L."/>
            <person name="Ye M."/>
            <person name="Zou H."/>
        </authorList>
    </citation>
    <scope>PHOSPHORYLATION [LARGE SCALE ANALYSIS] AT SER-252</scope>
    <scope>IDENTIFICATION BY MASS SPECTROMETRY [LARGE SCALE ANALYSIS]</scope>
    <source>
        <tissue>Liver</tissue>
    </source>
</reference>
<reference key="20">
    <citation type="journal article" date="2014" name="Proc. Natl. Acad. Sci. U.S.A.">
        <title>Mapping of SUMO sites and analysis of SUMOylation changes induced by external stimuli.</title>
        <authorList>
            <person name="Impens F."/>
            <person name="Radoshevich L."/>
            <person name="Cossart P."/>
            <person name="Ribet D."/>
        </authorList>
    </citation>
    <scope>SUMOYLATION [LARGE SCALE ANALYSIS] AT LYS-381</scope>
    <scope>IDENTIFICATION BY MASS SPECTROMETRY [LARGE SCALE ANALYSIS]</scope>
</reference>
<reference key="21">
    <citation type="journal article" date="2015" name="Proteomics">
        <title>N-terminome analysis of the human mitochondrial proteome.</title>
        <authorList>
            <person name="Vaca Jacome A.S."/>
            <person name="Rabilloud T."/>
            <person name="Schaeffer-Reiss C."/>
            <person name="Rompais M."/>
            <person name="Ayoub D."/>
            <person name="Lane L."/>
            <person name="Bairoch A."/>
            <person name="Van Dorsselaer A."/>
            <person name="Carapito C."/>
        </authorList>
    </citation>
    <scope>IDENTIFICATION BY MASS SPECTROMETRY [LARGE SCALE ANALYSIS]</scope>
</reference>
<reference key="22">
    <citation type="journal article" date="2017" name="Nat. Struct. Mol. Biol.">
        <title>Site-specific mapping of the human SUMO proteome reveals co-modification with phosphorylation.</title>
        <authorList>
            <person name="Hendriks I.A."/>
            <person name="Lyon D."/>
            <person name="Young C."/>
            <person name="Jensen L.J."/>
            <person name="Vertegaal A.C."/>
            <person name="Nielsen M.L."/>
        </authorList>
    </citation>
    <scope>SUMOYLATION [LARGE SCALE ANALYSIS] AT LYS-15; LYS-248 AND LYS-249</scope>
    <scope>IDENTIFICATION BY MASS SPECTROMETRY [LARGE SCALE ANALYSIS]</scope>
</reference>
<reference key="23">
    <citation type="journal article" date="2020" name="Sci. Rep.">
        <title>Dlec1 is required for spermatogenesis and male fertility in mice.</title>
        <authorList>
            <person name="Okitsu Y."/>
            <person name="Nagano M."/>
            <person name="Yamagata T."/>
            <person name="Ito C."/>
            <person name="Toshimori K."/>
            <person name="Dohra H."/>
            <person name="Fujii W."/>
            <person name="Yogo K."/>
        </authorList>
    </citation>
    <scope>INTERACTION WITH DLEC1</scope>
</reference>
<reference evidence="22 23 24 25 26" key="24">
    <citation type="journal article" date="2022" name="Cell">
        <title>Structural visualization of the tubulin folding pathway directed by human chaperonin TRiC/CCT.</title>
        <authorList>
            <person name="Gestaut D."/>
            <person name="Zhao Y."/>
            <person name="Park J."/>
            <person name="Ma B."/>
            <person name="Leitner A."/>
            <person name="Collier M."/>
            <person name="Pintilie G."/>
            <person name="Roh S.H."/>
            <person name="Chiu W."/>
            <person name="Frydman J."/>
        </authorList>
    </citation>
    <scope>STRUCTURE BY ELECTRON MICROSCOPY (2.90 ANGSTROMS) IN COMPLEX WITH TUBULIN</scope>
    <scope>FUNCTION</scope>
    <scope>SUBUNIT</scope>
    <scope>ADP AND MG(2+) BINDING SITES</scope>
    <scope>CATALYTIC ACTIVITY</scope>
</reference>
<reference evidence="18 19 20 21" key="25">
    <citation type="journal article" date="2022" name="Nat. Struct. Mol. Biol.">
        <title>Snapshots of actin and tubulin folding inside the TRiC chaperonin.</title>
        <authorList>
            <person name="Kelly J.J."/>
            <person name="Tranter D."/>
            <person name="Pardon E."/>
            <person name="Chi G."/>
            <person name="Kramer H."/>
            <person name="Happonen L."/>
            <person name="Knee K.M."/>
            <person name="Janz J.M."/>
            <person name="Steyaert J."/>
            <person name="Bulawa C."/>
            <person name="Paavilainen V.O."/>
            <person name="Huiskonen J.T."/>
            <person name="Yue W.W."/>
        </authorList>
    </citation>
    <scope>STRUCTURE BY ELECTRON MICROSCOPY (2.50 ANGSTROMS) IN COMPLEX WITH TUBULIN AND IN COMPLEX WITH ACTIN</scope>
    <scope>FUNCTION</scope>
    <scope>SUBUNIT</scope>
    <scope>ADP AND MG(2+) BINDING SITES</scope>
    <scope>CATALYTIC ACTIVITY</scope>
</reference>
<reference evidence="27 28 29 30 31 32 33 34" key="26">
    <citation type="journal article" date="2023" name="Commun. Biol.">
        <title>Pathway and mechanism of tubulin folding mediated by TRiC/CCT along its ATPase cycle revealed using cryo-EM.</title>
        <authorList>
            <person name="Liu C."/>
            <person name="Jin M."/>
            <person name="Wang S."/>
            <person name="Han W."/>
            <person name="Zhao Q."/>
            <person name="Wang Y."/>
            <person name="Xu C."/>
            <person name="Diao L."/>
            <person name="Yin Y."/>
            <person name="Peng C."/>
            <person name="Peng C."/>
            <person name="Bao L."/>
            <person name="Wang Y."/>
            <person name="Cong Y."/>
        </authorList>
    </citation>
    <scope>STRUCTURE BY ELECTRON MICROSCOPY (3.10 ANGSTROMS) IN COMPLEX WITH TUBULIN</scope>
    <scope>FUNCTION</scope>
    <scope>SUBUNIT</scope>
    <scope>ATP; ADP AND MG(2+) BINDING SITES</scope>
    <scope>CATALYTIC ACTIVITY</scope>
</reference>
<reference key="27">
    <citation type="journal article" date="2024" name="Science">
        <title>Brain malformations and seizures by impaired chaperonin function of TRiC.</title>
        <authorList>
            <person name="Kraft F."/>
            <person name="Rodriguez-Aliaga P."/>
            <person name="Yuan W."/>
            <person name="Franken L."/>
            <person name="Zajt K."/>
            <person name="Hasan D."/>
            <person name="Lee T.T."/>
            <person name="Flex E."/>
            <person name="Hentschel A."/>
            <person name="Innes A.M."/>
            <person name="Zheng B."/>
            <person name="Julia Suh D.S."/>
            <person name="Knopp C."/>
            <person name="Lausberg E."/>
            <person name="Krause J."/>
            <person name="Zhang X."/>
            <person name="Trapane P."/>
            <person name="Carroll R."/>
            <person name="McClatchey M."/>
            <person name="Fry A.E."/>
            <person name="Wang L."/>
            <person name="Giesselmann S."/>
            <person name="Hoang H."/>
            <person name="Baldridge D."/>
            <person name="Silverman G.A."/>
            <person name="Radio F.C."/>
            <person name="Bertini E."/>
            <person name="Ciolfi A."/>
            <person name="Blood K.A."/>
            <person name="de Sainte Agathe J.M."/>
            <person name="Charles P."/>
            <person name="Bergant G."/>
            <person name="Cuturilo G."/>
            <person name="Peterlin B."/>
            <person name="Diderich K."/>
            <person name="Streff H."/>
            <person name="Robak L."/>
            <person name="Oegema R."/>
            <person name="van Binsbergen E."/>
            <person name="Herriges J."/>
            <person name="Saunders C.J."/>
            <person name="Maier A."/>
            <person name="Wolking S."/>
            <person name="Weber Y."/>
            <person name="Lochmueller H."/>
            <person name="Meyer S."/>
            <person name="Aleman A."/>
            <person name="Polavarapu K."/>
            <person name="Nicolas G."/>
            <person name="Goldenberg A."/>
            <person name="Guyant L."/>
            <person name="Pope K."/>
            <person name="Hehmeyer K.N."/>
            <person name="Monaghan K.G."/>
            <person name="Quade A."/>
            <person name="Smol T."/>
            <person name="Caumes R."/>
            <person name="Duerinckx S."/>
            <person name="Depondt C."/>
            <person name="Van Paesschen W."/>
            <person name="Rieubland C."/>
            <person name="Poloni C."/>
            <person name="Guipponi M."/>
            <person name="Arcioni S."/>
            <person name="Meuwissen M."/>
            <person name="Jansen A.C."/>
            <person name="Rosenblum J."/>
            <person name="Haack T.B."/>
            <person name="Bertrand M."/>
            <person name="Gerstner L."/>
            <person name="Magg J."/>
            <person name="Riess O."/>
            <person name="Schulz J.B."/>
            <person name="Wagner N."/>
            <person name="Wiesmann M."/>
            <person name="Weis J."/>
            <person name="Eggermann T."/>
            <person name="Begemann M."/>
            <person name="Roos A."/>
            <person name="Haeusler M."/>
            <person name="Schedl T."/>
            <person name="Tartaglia M."/>
            <person name="Bremer J."/>
            <person name="Pak S.C."/>
            <person name="Frydman J."/>
            <person name="Elbracht M."/>
            <person name="Kurth I."/>
        </authorList>
    </citation>
    <scope>VARIANTS NEDSVH ARG-12 AND 518-ARG--GLU-545 DEL</scope>
    <scope>CHARACTERIZATION OF VARIANTS NEDSVH ARG-12 AND 518-ARG--GLU-545 DEL</scope>
    <scope>INVOLVEMENT IN NEDSVH</scope>
</reference>
<proteinExistence type="evidence at protein level"/>
<keyword id="KW-0002">3D-structure</keyword>
<keyword id="KW-0007">Acetylation</keyword>
<keyword id="KW-0025">Alternative splicing</keyword>
<keyword id="KW-0067">ATP-binding</keyword>
<keyword id="KW-0143">Chaperone</keyword>
<keyword id="KW-0963">Cytoplasm</keyword>
<keyword id="KW-0903">Direct protein sequencing</keyword>
<keyword id="KW-0225">Disease variant</keyword>
<keyword id="KW-1015">Disulfide bond</keyword>
<keyword id="KW-0378">Hydrolase</keyword>
<keyword id="KW-0991">Intellectual disability</keyword>
<keyword id="KW-1017">Isopeptide bond</keyword>
<keyword id="KW-0547">Nucleotide-binding</keyword>
<keyword id="KW-0597">Phosphoprotein</keyword>
<keyword id="KW-1267">Proteomics identification</keyword>
<keyword id="KW-1185">Reference proteome</keyword>
<keyword id="KW-0832">Ubl conjugation</keyword>
<dbReference type="EC" id="3.6.1.-" evidence="15 16 17"/>
<dbReference type="EMBL" id="AK293477">
    <property type="protein sequence ID" value="BAG56968.1"/>
    <property type="molecule type" value="mRNA"/>
</dbReference>
<dbReference type="EMBL" id="AL833197">
    <property type="protein sequence ID" value="CAI46192.1"/>
    <property type="molecule type" value="mRNA"/>
</dbReference>
<dbReference type="EMBL" id="AL589685">
    <property type="status" value="NOT_ANNOTATED_CDS"/>
    <property type="molecule type" value="Genomic_DNA"/>
</dbReference>
<dbReference type="EMBL" id="BC006501">
    <property type="protein sequence ID" value="AAH06501.3"/>
    <property type="molecule type" value="mRNA"/>
</dbReference>
<dbReference type="EMBL" id="BC008019">
    <property type="protein sequence ID" value="AAH08019.1"/>
    <property type="status" value="ALT_INIT"/>
    <property type="molecule type" value="mRNA"/>
</dbReference>
<dbReference type="EMBL" id="X74801">
    <property type="protein sequence ID" value="CAA52808.1"/>
    <property type="molecule type" value="mRNA"/>
</dbReference>
<dbReference type="EMBL" id="U17104">
    <property type="protein sequence ID" value="AAC50068.1"/>
    <property type="molecule type" value="mRNA"/>
</dbReference>
<dbReference type="CCDS" id="CCDS1140.2">
    <molecule id="P49368-1"/>
</dbReference>
<dbReference type="CCDS" id="CCDS30888.1">
    <molecule id="P49368-2"/>
</dbReference>
<dbReference type="PIR" id="S61529">
    <property type="entry name" value="A38983"/>
</dbReference>
<dbReference type="RefSeq" id="NP_001008800.1">
    <molecule id="P49368-2"/>
    <property type="nucleotide sequence ID" value="NM_001008800.3"/>
</dbReference>
<dbReference type="RefSeq" id="NP_005989.3">
    <molecule id="P49368-1"/>
    <property type="nucleotide sequence ID" value="NM_005998.4"/>
</dbReference>
<dbReference type="PDB" id="6NR8">
    <property type="method" value="EM"/>
    <property type="resolution" value="7.80 A"/>
    <property type="chains" value="C/K=13-525"/>
</dbReference>
<dbReference type="PDB" id="6NR9">
    <property type="method" value="EM"/>
    <property type="resolution" value="8.50 A"/>
    <property type="chains" value="C/K=13-525"/>
</dbReference>
<dbReference type="PDB" id="6NRA">
    <property type="method" value="EM"/>
    <property type="resolution" value="7.70 A"/>
    <property type="chains" value="C/K=13-525"/>
</dbReference>
<dbReference type="PDB" id="6NRB">
    <property type="method" value="EM"/>
    <property type="resolution" value="8.70 A"/>
    <property type="chains" value="C/K=13-525"/>
</dbReference>
<dbReference type="PDB" id="6NRC">
    <property type="method" value="EM"/>
    <property type="resolution" value="8.30 A"/>
    <property type="chains" value="C/K=13-525"/>
</dbReference>
<dbReference type="PDB" id="6NRD">
    <property type="method" value="EM"/>
    <property type="resolution" value="8.20 A"/>
    <property type="chains" value="C/K=13-525"/>
</dbReference>
<dbReference type="PDB" id="6QB8">
    <property type="method" value="EM"/>
    <property type="resolution" value="3.97 A"/>
    <property type="chains" value="G/g=2-545"/>
</dbReference>
<dbReference type="PDB" id="7LUM">
    <property type="method" value="EM"/>
    <property type="resolution" value="4.50 A"/>
    <property type="chains" value="H/P=1-545"/>
</dbReference>
<dbReference type="PDB" id="7LUP">
    <property type="method" value="EM"/>
    <property type="resolution" value="6.20 A"/>
    <property type="chains" value="H/P=1-545"/>
</dbReference>
<dbReference type="PDB" id="7NVL">
    <property type="method" value="EM"/>
    <property type="resolution" value="2.50 A"/>
    <property type="chains" value="G/g=1-545"/>
</dbReference>
<dbReference type="PDB" id="7NVM">
    <property type="method" value="EM"/>
    <property type="resolution" value="3.10 A"/>
    <property type="chains" value="G/g=1-545"/>
</dbReference>
<dbReference type="PDB" id="7NVN">
    <property type="method" value="EM"/>
    <property type="resolution" value="3.00 A"/>
    <property type="chains" value="G/g=1-545"/>
</dbReference>
<dbReference type="PDB" id="7NVO">
    <property type="method" value="EM"/>
    <property type="resolution" value="3.50 A"/>
    <property type="chains" value="G/g=1-545"/>
</dbReference>
<dbReference type="PDB" id="7TRG">
    <property type="method" value="EM"/>
    <property type="resolution" value="3.00 A"/>
    <property type="chains" value="H=1-545"/>
</dbReference>
<dbReference type="PDB" id="7TTN">
    <property type="method" value="EM"/>
    <property type="resolution" value="3.30 A"/>
    <property type="chains" value="H=1-545"/>
</dbReference>
<dbReference type="PDB" id="7TTT">
    <property type="method" value="EM"/>
    <property type="resolution" value="2.90 A"/>
    <property type="chains" value="H=1-545"/>
</dbReference>
<dbReference type="PDB" id="7TUB">
    <property type="method" value="EM"/>
    <property type="resolution" value="3.60 A"/>
    <property type="chains" value="H=1-545"/>
</dbReference>
<dbReference type="PDB" id="7WU7">
    <property type="method" value="EM"/>
    <property type="resolution" value="3.85 A"/>
    <property type="chains" value="C/K=1-545"/>
</dbReference>
<dbReference type="PDB" id="7WZ3">
    <property type="method" value="EM"/>
    <property type="resolution" value="4.10 A"/>
    <property type="chains" value="G/g=1-545"/>
</dbReference>
<dbReference type="PDB" id="7X0A">
    <property type="method" value="EM"/>
    <property type="resolution" value="3.10 A"/>
    <property type="chains" value="G/g=1-545"/>
</dbReference>
<dbReference type="PDB" id="7X0S">
    <property type="method" value="EM"/>
    <property type="resolution" value="3.10 A"/>
    <property type="chains" value="G/N=1-545"/>
</dbReference>
<dbReference type="PDB" id="7X0V">
    <property type="method" value="EM"/>
    <property type="resolution" value="3.20 A"/>
    <property type="chains" value="G/N=1-545"/>
</dbReference>
<dbReference type="PDB" id="7X3J">
    <property type="method" value="EM"/>
    <property type="resolution" value="4.20 A"/>
    <property type="chains" value="G/g=1-545"/>
</dbReference>
<dbReference type="PDB" id="7X3U">
    <property type="method" value="EM"/>
    <property type="resolution" value="3.30 A"/>
    <property type="chains" value="G/g=1-545"/>
</dbReference>
<dbReference type="PDB" id="7X6Q">
    <property type="method" value="EM"/>
    <property type="resolution" value="4.50 A"/>
    <property type="chains" value="G/N=1-545"/>
</dbReference>
<dbReference type="PDB" id="7X7Y">
    <property type="method" value="EM"/>
    <property type="resolution" value="3.80 A"/>
    <property type="chains" value="G/g=1-545"/>
</dbReference>
<dbReference type="PDB" id="8HKI">
    <property type="method" value="EM"/>
    <property type="resolution" value="3.10 A"/>
    <property type="chains" value="G/g=1-545"/>
</dbReference>
<dbReference type="PDB" id="8I1U">
    <property type="method" value="EM"/>
    <property type="resolution" value="3.24 A"/>
    <property type="chains" value="C/K=1-545"/>
</dbReference>
<dbReference type="PDB" id="8I6J">
    <property type="method" value="EM"/>
    <property type="resolution" value="3.82 A"/>
    <property type="chains" value="C=1-545"/>
</dbReference>
<dbReference type="PDB" id="8I9U">
    <property type="method" value="EM"/>
    <property type="resolution" value="3.10 A"/>
    <property type="chains" value="C/K=1-545"/>
</dbReference>
<dbReference type="PDB" id="8IB8">
    <property type="method" value="EM"/>
    <property type="resolution" value="4.42 A"/>
    <property type="chains" value="C/K=1-545"/>
</dbReference>
<dbReference type="PDB" id="8SFE">
    <property type="method" value="EM"/>
    <property type="resolution" value="3.36 A"/>
    <property type="chains" value="G/g=3-530"/>
</dbReference>
<dbReference type="PDB" id="8SFF">
    <property type="method" value="EM"/>
    <property type="resolution" value="3.20 A"/>
    <property type="chains" value="G/g=3-530"/>
</dbReference>
<dbReference type="PDB" id="8SG8">
    <property type="method" value="EM"/>
    <property type="resolution" value="3.00 A"/>
    <property type="chains" value="G/g=3-530"/>
</dbReference>
<dbReference type="PDB" id="8SG9">
    <property type="method" value="EM"/>
    <property type="resolution" value="2.90 A"/>
    <property type="chains" value="G/g=3-530"/>
</dbReference>
<dbReference type="PDB" id="8SGC">
    <property type="method" value="EM"/>
    <property type="resolution" value="2.90 A"/>
    <property type="chains" value="G/g=3-530"/>
</dbReference>
<dbReference type="PDB" id="8SGL">
    <property type="method" value="EM"/>
    <property type="resolution" value="2.90 A"/>
    <property type="chains" value="G/g=3-530"/>
</dbReference>
<dbReference type="PDB" id="8SGQ">
    <property type="method" value="EM"/>
    <property type="resolution" value="3.70 A"/>
    <property type="chains" value="G/g=3-530"/>
</dbReference>
<dbReference type="PDB" id="8SH9">
    <property type="method" value="EM"/>
    <property type="resolution" value="2.70 A"/>
    <property type="chains" value="G/g=3-530"/>
</dbReference>
<dbReference type="PDB" id="8SHA">
    <property type="method" value="EM"/>
    <property type="resolution" value="3.00 A"/>
    <property type="chains" value="G/g=3-530"/>
</dbReference>
<dbReference type="PDB" id="8SHD">
    <property type="method" value="EM"/>
    <property type="resolution" value="2.90 A"/>
    <property type="chains" value="G/g=3-530"/>
</dbReference>
<dbReference type="PDB" id="8SHE">
    <property type="method" value="EM"/>
    <property type="resolution" value="2.80 A"/>
    <property type="chains" value="G/g=3-530"/>
</dbReference>
<dbReference type="PDB" id="8SHF">
    <property type="method" value="EM"/>
    <property type="resolution" value="3.00 A"/>
    <property type="chains" value="G/g=3-530"/>
</dbReference>
<dbReference type="PDB" id="8SHG">
    <property type="method" value="EM"/>
    <property type="resolution" value="2.80 A"/>
    <property type="chains" value="G/g=3-530"/>
</dbReference>
<dbReference type="PDB" id="8SHL">
    <property type="method" value="EM"/>
    <property type="resolution" value="3.00 A"/>
    <property type="chains" value="G/g=3-530"/>
</dbReference>
<dbReference type="PDB" id="8SHN">
    <property type="method" value="EM"/>
    <property type="resolution" value="2.80 A"/>
    <property type="chains" value="G/g=3-530"/>
</dbReference>
<dbReference type="PDB" id="8SHO">
    <property type="method" value="EM"/>
    <property type="resolution" value="3.00 A"/>
    <property type="chains" value="G/g=3-530"/>
</dbReference>
<dbReference type="PDB" id="8SHP">
    <property type="method" value="EM"/>
    <property type="resolution" value="3.00 A"/>
    <property type="chains" value="G/g=3-530"/>
</dbReference>
<dbReference type="PDB" id="8SHQ">
    <property type="method" value="EM"/>
    <property type="resolution" value="2.90 A"/>
    <property type="chains" value="G/g=3-530"/>
</dbReference>
<dbReference type="PDB" id="8SHT">
    <property type="method" value="EM"/>
    <property type="resolution" value="3.00 A"/>
    <property type="chains" value="G/g=3-530"/>
</dbReference>
<dbReference type="PDBsum" id="6NR8"/>
<dbReference type="PDBsum" id="6NR9"/>
<dbReference type="PDBsum" id="6NRA"/>
<dbReference type="PDBsum" id="6NRB"/>
<dbReference type="PDBsum" id="6NRC"/>
<dbReference type="PDBsum" id="6NRD"/>
<dbReference type="PDBsum" id="6QB8"/>
<dbReference type="PDBsum" id="7LUM"/>
<dbReference type="PDBsum" id="7LUP"/>
<dbReference type="PDBsum" id="7NVL"/>
<dbReference type="PDBsum" id="7NVM"/>
<dbReference type="PDBsum" id="7NVN"/>
<dbReference type="PDBsum" id="7NVO"/>
<dbReference type="PDBsum" id="7TRG"/>
<dbReference type="PDBsum" id="7TTN"/>
<dbReference type="PDBsum" id="7TTT"/>
<dbReference type="PDBsum" id="7TUB"/>
<dbReference type="PDBsum" id="7WU7"/>
<dbReference type="PDBsum" id="7WZ3"/>
<dbReference type="PDBsum" id="7X0A"/>
<dbReference type="PDBsum" id="7X0S"/>
<dbReference type="PDBsum" id="7X0V"/>
<dbReference type="PDBsum" id="7X3J"/>
<dbReference type="PDBsum" id="7X3U"/>
<dbReference type="PDBsum" id="7X6Q"/>
<dbReference type="PDBsum" id="7X7Y"/>
<dbReference type="PDBsum" id="8HKI"/>
<dbReference type="PDBsum" id="8I1U"/>
<dbReference type="PDBsum" id="8I6J"/>
<dbReference type="PDBsum" id="8I9U"/>
<dbReference type="PDBsum" id="8IB8"/>
<dbReference type="PDBsum" id="8SFE"/>
<dbReference type="PDBsum" id="8SFF"/>
<dbReference type="PDBsum" id="8SG8"/>
<dbReference type="PDBsum" id="8SG9"/>
<dbReference type="PDBsum" id="8SGC"/>
<dbReference type="PDBsum" id="8SGL"/>
<dbReference type="PDBsum" id="8SGQ"/>
<dbReference type="PDBsum" id="8SH9"/>
<dbReference type="PDBsum" id="8SHA"/>
<dbReference type="PDBsum" id="8SHD"/>
<dbReference type="PDBsum" id="8SHE"/>
<dbReference type="PDBsum" id="8SHF"/>
<dbReference type="PDBsum" id="8SHG"/>
<dbReference type="PDBsum" id="8SHL"/>
<dbReference type="PDBsum" id="8SHN"/>
<dbReference type="PDBsum" id="8SHO"/>
<dbReference type="PDBsum" id="8SHP"/>
<dbReference type="PDBsum" id="8SHQ"/>
<dbReference type="PDBsum" id="8SHT"/>
<dbReference type="EMDB" id="EMD-0490"/>
<dbReference type="EMDB" id="EMD-0491"/>
<dbReference type="EMDB" id="EMD-0492"/>
<dbReference type="EMDB" id="EMD-0493"/>
<dbReference type="EMDB" id="EMD-0494"/>
<dbReference type="EMDB" id="EMD-0495"/>
<dbReference type="EMDB" id="EMD-12605"/>
<dbReference type="EMDB" id="EMD-12606"/>
<dbReference type="EMDB" id="EMD-12607"/>
<dbReference type="EMDB" id="EMD-12608"/>
<dbReference type="EMDB" id="EMD-13754"/>
<dbReference type="EMDB" id="EMD-23522"/>
<dbReference type="EMDB" id="EMD-23526"/>
<dbReference type="EMDB" id="EMD-26089"/>
<dbReference type="EMDB" id="EMD-26120"/>
<dbReference type="EMDB" id="EMD-26123"/>
<dbReference type="EMDB" id="EMD-26131"/>
<dbReference type="EMDB" id="EMD-32823"/>
<dbReference type="EMDB" id="EMD-32903"/>
<dbReference type="EMDB" id="EMD-32922"/>
<dbReference type="EMDB" id="EMD-32923"/>
<dbReference type="EMDB" id="EMD-32926"/>
<dbReference type="EMDB" id="EMD-32989"/>
<dbReference type="EMDB" id="EMD-32993"/>
<dbReference type="EMDB" id="EMD-33025"/>
<dbReference type="EMDB" id="EMD-33053"/>
<dbReference type="EMDB" id="EMD-34852"/>
<dbReference type="EMDB" id="EMD-35122"/>
<dbReference type="EMDB" id="EMD-35199"/>
<dbReference type="EMDB" id="EMD-35284"/>
<dbReference type="EMDB" id="EMD-35335"/>
<dbReference type="EMDB" id="EMD-40439"/>
<dbReference type="EMDB" id="EMD-40440"/>
<dbReference type="EMDB" id="EMD-40452"/>
<dbReference type="EMDB" id="EMD-40453"/>
<dbReference type="EMDB" id="EMD-40454"/>
<dbReference type="EMDB" id="EMD-40461"/>
<dbReference type="EMDB" id="EMD-40464"/>
<dbReference type="EMDB" id="EMD-40481"/>
<dbReference type="EMDB" id="EMD-40482"/>
<dbReference type="EMDB" id="EMD-40484"/>
<dbReference type="EMDB" id="EMD-40485"/>
<dbReference type="EMDB" id="EMD-40486"/>
<dbReference type="EMDB" id="EMD-40487"/>
<dbReference type="EMDB" id="EMD-40488"/>
<dbReference type="EMDB" id="EMD-40489"/>
<dbReference type="EMDB" id="EMD-40490"/>
<dbReference type="EMDB" id="EMD-40491"/>
<dbReference type="EMDB" id="EMD-40492"/>
<dbReference type="EMDB" id="EMD-40494"/>
<dbReference type="EMDB" id="EMD-4489"/>
<dbReference type="SMR" id="P49368"/>
<dbReference type="BioGRID" id="113054">
    <property type="interactions" value="656"/>
</dbReference>
<dbReference type="ComplexPortal" id="CPX-6030">
    <property type="entry name" value="Chaperonin-containing T-complex"/>
</dbReference>
<dbReference type="CORUM" id="P49368"/>
<dbReference type="DIP" id="DIP-32970N"/>
<dbReference type="FunCoup" id="P49368">
    <property type="interactions" value="3944"/>
</dbReference>
<dbReference type="IntAct" id="P49368">
    <property type="interactions" value="376"/>
</dbReference>
<dbReference type="MINT" id="P49368"/>
<dbReference type="STRING" id="9606.ENSP00000295688"/>
<dbReference type="DrugBank" id="DB11638">
    <property type="generic name" value="Artenimol"/>
</dbReference>
<dbReference type="DrugBank" id="DB04395">
    <property type="generic name" value="Phosphoaminophosphonic Acid-Adenylate Ester"/>
</dbReference>
<dbReference type="GlyGen" id="P49368">
    <property type="glycosylation" value="2 sites, 1 N-linked glycan (1 site), 1 O-linked glycan (1 site)"/>
</dbReference>
<dbReference type="iPTMnet" id="P49368"/>
<dbReference type="MetOSite" id="P49368"/>
<dbReference type="PhosphoSitePlus" id="P49368"/>
<dbReference type="SwissPalm" id="P49368"/>
<dbReference type="BioMuta" id="CCT3"/>
<dbReference type="DMDM" id="66774185"/>
<dbReference type="OGP" id="P49368"/>
<dbReference type="CPTAC" id="CPTAC-474"/>
<dbReference type="CPTAC" id="CPTAC-475"/>
<dbReference type="jPOST" id="P49368"/>
<dbReference type="MassIVE" id="P49368"/>
<dbReference type="PaxDb" id="9606-ENSP00000295688"/>
<dbReference type="PeptideAtlas" id="P49368"/>
<dbReference type="PRIDE" id="P49368"/>
<dbReference type="ProteomicsDB" id="55998">
    <molecule id="P49368-1"/>
</dbReference>
<dbReference type="ProteomicsDB" id="55999">
    <molecule id="P49368-2"/>
</dbReference>
<dbReference type="Pumba" id="P49368"/>
<dbReference type="TopDownProteomics" id="P49368-1">
    <molecule id="P49368-1"/>
</dbReference>
<dbReference type="Antibodypedia" id="1677">
    <property type="antibodies" value="249 antibodies from 33 providers"/>
</dbReference>
<dbReference type="DNASU" id="7203"/>
<dbReference type="Ensembl" id="ENST00000295688.8">
    <molecule id="P49368-1"/>
    <property type="protein sequence ID" value="ENSP00000295688.3"/>
    <property type="gene ID" value="ENSG00000163468.15"/>
</dbReference>
<dbReference type="Ensembl" id="ENST00000368259.6">
    <molecule id="P49368-2"/>
    <property type="protein sequence ID" value="ENSP00000357242.2"/>
    <property type="gene ID" value="ENSG00000163468.15"/>
</dbReference>
<dbReference type="GeneID" id="7203"/>
<dbReference type="KEGG" id="hsa:7203"/>
<dbReference type="MANE-Select" id="ENST00000295688.8">
    <property type="protein sequence ID" value="ENSP00000295688.3"/>
    <property type="RefSeq nucleotide sequence ID" value="NM_005998.5"/>
    <property type="RefSeq protein sequence ID" value="NP_005989.3"/>
</dbReference>
<dbReference type="UCSC" id="uc001fol.3">
    <molecule id="P49368-1"/>
    <property type="organism name" value="human"/>
</dbReference>
<dbReference type="AGR" id="HGNC:1616"/>
<dbReference type="CTD" id="7203"/>
<dbReference type="DisGeNET" id="7203"/>
<dbReference type="GeneCards" id="CCT3"/>
<dbReference type="HGNC" id="HGNC:1616">
    <property type="gene designation" value="CCT3"/>
</dbReference>
<dbReference type="HPA" id="ENSG00000163468">
    <property type="expression patterns" value="Low tissue specificity"/>
</dbReference>
<dbReference type="MIM" id="600114">
    <property type="type" value="gene"/>
</dbReference>
<dbReference type="MIM" id="621034">
    <property type="type" value="phenotype"/>
</dbReference>
<dbReference type="neXtProt" id="NX_P49368"/>
<dbReference type="OpenTargets" id="ENSG00000163468"/>
<dbReference type="PharmGKB" id="PA26180"/>
<dbReference type="VEuPathDB" id="HostDB:ENSG00000163468"/>
<dbReference type="eggNOG" id="KOG0364">
    <property type="taxonomic scope" value="Eukaryota"/>
</dbReference>
<dbReference type="GeneTree" id="ENSGT00570000079224"/>
<dbReference type="HOGENOM" id="CLU_008891_7_3_1"/>
<dbReference type="InParanoid" id="P49368"/>
<dbReference type="OMA" id="CGGSTIR"/>
<dbReference type="OrthoDB" id="275057at2759"/>
<dbReference type="PAN-GO" id="P49368">
    <property type="GO annotations" value="3 GO annotations based on evolutionary models"/>
</dbReference>
<dbReference type="PhylomeDB" id="P49368"/>
<dbReference type="TreeFam" id="TF105649"/>
<dbReference type="BRENDA" id="3.6.4.B10">
    <property type="organism ID" value="2681"/>
</dbReference>
<dbReference type="PathwayCommons" id="P49368"/>
<dbReference type="Reactome" id="R-HSA-389957">
    <property type="pathway name" value="Prefoldin mediated transfer of substrate to CCT/TriC"/>
</dbReference>
<dbReference type="Reactome" id="R-HSA-389960">
    <property type="pathway name" value="Formation of tubulin folding intermediates by CCT/TriC"/>
</dbReference>
<dbReference type="Reactome" id="R-HSA-390450">
    <property type="pathway name" value="Folding of actin by CCT/TriC"/>
</dbReference>
<dbReference type="Reactome" id="R-HSA-390471">
    <property type="pathway name" value="Association of TriC/CCT with target proteins during biosynthesis"/>
</dbReference>
<dbReference type="Reactome" id="R-HSA-5620922">
    <property type="pathway name" value="BBSome-mediated cargo-targeting to cilium"/>
</dbReference>
<dbReference type="Reactome" id="R-HSA-6814122">
    <property type="pathway name" value="Cooperation of PDCL (PhLP1) and TRiC/CCT in G-protein beta folding"/>
</dbReference>
<dbReference type="SignaLink" id="P49368"/>
<dbReference type="SIGNOR" id="P49368"/>
<dbReference type="BioGRID-ORCS" id="7203">
    <property type="hits" value="829 hits in 1120 CRISPR screens"/>
</dbReference>
<dbReference type="CD-CODE" id="6F24707C">
    <property type="entry name" value="Cajal body"/>
</dbReference>
<dbReference type="CD-CODE" id="FB4E32DD">
    <property type="entry name" value="Presynaptic clusters and postsynaptic densities"/>
</dbReference>
<dbReference type="ChiTaRS" id="CCT3">
    <property type="organism name" value="human"/>
</dbReference>
<dbReference type="GeneWiki" id="CCT3"/>
<dbReference type="GenomeRNAi" id="7203"/>
<dbReference type="Pharos" id="P49368">
    <property type="development level" value="Tbio"/>
</dbReference>
<dbReference type="PRO" id="PR:P49368"/>
<dbReference type="Proteomes" id="UP000005640">
    <property type="component" value="Chromosome 1"/>
</dbReference>
<dbReference type="RNAct" id="P49368">
    <property type="molecule type" value="protein"/>
</dbReference>
<dbReference type="Bgee" id="ENSG00000163468">
    <property type="expression patterns" value="Expressed in primordial germ cell in gonad and 219 other cell types or tissues"/>
</dbReference>
<dbReference type="ExpressionAtlas" id="P49368">
    <property type="expression patterns" value="baseline and differential"/>
</dbReference>
<dbReference type="GO" id="GO:0044297">
    <property type="term" value="C:cell body"/>
    <property type="evidence" value="ECO:0007669"/>
    <property type="project" value="Ensembl"/>
</dbReference>
<dbReference type="GO" id="GO:0005832">
    <property type="term" value="C:chaperonin-containing T-complex"/>
    <property type="evidence" value="ECO:0000314"/>
    <property type="project" value="UniProtKB"/>
</dbReference>
<dbReference type="GO" id="GO:0005856">
    <property type="term" value="C:cytoskeleton"/>
    <property type="evidence" value="ECO:0000304"/>
    <property type="project" value="ProtInc"/>
</dbReference>
<dbReference type="GO" id="GO:0005829">
    <property type="term" value="C:cytosol"/>
    <property type="evidence" value="ECO:0000304"/>
    <property type="project" value="Reactome"/>
</dbReference>
<dbReference type="GO" id="GO:0070062">
    <property type="term" value="C:extracellular exosome"/>
    <property type="evidence" value="ECO:0007005"/>
    <property type="project" value="UniProtKB"/>
</dbReference>
<dbReference type="GO" id="GO:0005874">
    <property type="term" value="C:microtubule"/>
    <property type="evidence" value="ECO:0000314"/>
    <property type="project" value="UniProtKB"/>
</dbReference>
<dbReference type="GO" id="GO:0002199">
    <property type="term" value="C:zona pellucida receptor complex"/>
    <property type="evidence" value="ECO:0007669"/>
    <property type="project" value="Ensembl"/>
</dbReference>
<dbReference type="GO" id="GO:0005524">
    <property type="term" value="F:ATP binding"/>
    <property type="evidence" value="ECO:0007669"/>
    <property type="project" value="UniProtKB-KW"/>
</dbReference>
<dbReference type="GO" id="GO:0016887">
    <property type="term" value="F:ATP hydrolysis activity"/>
    <property type="evidence" value="ECO:0007669"/>
    <property type="project" value="InterPro"/>
</dbReference>
<dbReference type="GO" id="GO:0140662">
    <property type="term" value="F:ATP-dependent protein folding chaperone"/>
    <property type="evidence" value="ECO:0007669"/>
    <property type="project" value="InterPro"/>
</dbReference>
<dbReference type="GO" id="GO:0044183">
    <property type="term" value="F:protein folding chaperone"/>
    <property type="evidence" value="ECO:0000314"/>
    <property type="project" value="BHF-UCL"/>
</dbReference>
<dbReference type="GO" id="GO:0003723">
    <property type="term" value="F:RNA binding"/>
    <property type="evidence" value="ECO:0007005"/>
    <property type="project" value="UniProtKB"/>
</dbReference>
<dbReference type="GO" id="GO:0051082">
    <property type="term" value="F:unfolded protein binding"/>
    <property type="evidence" value="ECO:0000318"/>
    <property type="project" value="GO_Central"/>
</dbReference>
<dbReference type="GO" id="GO:0007339">
    <property type="term" value="P:binding of sperm to zona pellucida"/>
    <property type="evidence" value="ECO:0007669"/>
    <property type="project" value="Ensembl"/>
</dbReference>
<dbReference type="GO" id="GO:0051086">
    <property type="term" value="P:chaperone mediated protein folding independent of cofactor"/>
    <property type="evidence" value="ECO:0000315"/>
    <property type="project" value="BHF-UCL"/>
</dbReference>
<dbReference type="GO" id="GO:0061077">
    <property type="term" value="P:chaperone-mediated protein folding"/>
    <property type="evidence" value="ECO:0000314"/>
    <property type="project" value="ComplexPortal"/>
</dbReference>
<dbReference type="GO" id="GO:1904871">
    <property type="term" value="P:positive regulation of protein localization to Cajal body"/>
    <property type="evidence" value="ECO:0007001"/>
    <property type="project" value="BHF-UCL"/>
</dbReference>
<dbReference type="GO" id="GO:1904874">
    <property type="term" value="P:positive regulation of telomerase RNA localization to Cajal body"/>
    <property type="evidence" value="ECO:0007001"/>
    <property type="project" value="BHF-UCL"/>
</dbReference>
<dbReference type="GO" id="GO:0032212">
    <property type="term" value="P:positive regulation of telomere maintenance via telomerase"/>
    <property type="evidence" value="ECO:0000315"/>
    <property type="project" value="BHF-UCL"/>
</dbReference>
<dbReference type="GO" id="GO:0006457">
    <property type="term" value="P:protein folding"/>
    <property type="evidence" value="ECO:0000314"/>
    <property type="project" value="FlyBase"/>
</dbReference>
<dbReference type="GO" id="GO:0050821">
    <property type="term" value="P:protein stabilization"/>
    <property type="evidence" value="ECO:0000315"/>
    <property type="project" value="BHF-UCL"/>
</dbReference>
<dbReference type="CDD" id="cd03337">
    <property type="entry name" value="TCP1_gamma"/>
    <property type="match status" value="1"/>
</dbReference>
<dbReference type="FunFam" id="1.10.560.10:FF:000069">
    <property type="entry name" value="T-complex protein 1 subunit gamma"/>
    <property type="match status" value="1"/>
</dbReference>
<dbReference type="FunFam" id="1.10.560.10:FF:000076">
    <property type="entry name" value="T-complex protein 1 subunit gamma"/>
    <property type="match status" value="1"/>
</dbReference>
<dbReference type="FunFam" id="3.50.7.10:FF:000005">
    <property type="entry name" value="T-complex protein 1 subunit gamma"/>
    <property type="match status" value="1"/>
</dbReference>
<dbReference type="Gene3D" id="3.50.7.10">
    <property type="entry name" value="GroEL"/>
    <property type="match status" value="1"/>
</dbReference>
<dbReference type="Gene3D" id="1.10.560.10">
    <property type="entry name" value="GroEL-like equatorial domain"/>
    <property type="match status" value="1"/>
</dbReference>
<dbReference type="Gene3D" id="3.30.260.10">
    <property type="entry name" value="TCP-1-like chaperonin intermediate domain"/>
    <property type="match status" value="1"/>
</dbReference>
<dbReference type="InterPro" id="IPR012719">
    <property type="entry name" value="Chap_CCT_gamma"/>
</dbReference>
<dbReference type="InterPro" id="IPR017998">
    <property type="entry name" value="Chaperone_TCP-1"/>
</dbReference>
<dbReference type="InterPro" id="IPR002194">
    <property type="entry name" value="Chaperonin_TCP-1_CS"/>
</dbReference>
<dbReference type="InterPro" id="IPR002423">
    <property type="entry name" value="Cpn60/GroEL/TCP-1"/>
</dbReference>
<dbReference type="InterPro" id="IPR027409">
    <property type="entry name" value="GroEL-like_apical_dom_sf"/>
</dbReference>
<dbReference type="InterPro" id="IPR027413">
    <property type="entry name" value="GROEL-like_equatorial_sf"/>
</dbReference>
<dbReference type="InterPro" id="IPR027410">
    <property type="entry name" value="TCP-1-like_intermed_sf"/>
</dbReference>
<dbReference type="InterPro" id="IPR053374">
    <property type="entry name" value="TCP-1_chaperonin"/>
</dbReference>
<dbReference type="InterPro" id="IPR054827">
    <property type="entry name" value="thermosome_alpha"/>
</dbReference>
<dbReference type="NCBIfam" id="TIGR02344">
    <property type="entry name" value="chap_CCT_gamma"/>
    <property type="match status" value="1"/>
</dbReference>
<dbReference type="NCBIfam" id="NF041082">
    <property type="entry name" value="thermosome_alpha"/>
    <property type="match status" value="1"/>
</dbReference>
<dbReference type="NCBIfam" id="NF041083">
    <property type="entry name" value="thermosome_beta"/>
    <property type="match status" value="1"/>
</dbReference>
<dbReference type="PANTHER" id="PTHR11353">
    <property type="entry name" value="CHAPERONIN"/>
    <property type="match status" value="1"/>
</dbReference>
<dbReference type="Pfam" id="PF00118">
    <property type="entry name" value="Cpn60_TCP1"/>
    <property type="match status" value="1"/>
</dbReference>
<dbReference type="PRINTS" id="PR00304">
    <property type="entry name" value="TCOMPLEXTCP1"/>
</dbReference>
<dbReference type="SUPFAM" id="SSF52029">
    <property type="entry name" value="GroEL apical domain-like"/>
    <property type="match status" value="1"/>
</dbReference>
<dbReference type="SUPFAM" id="SSF48592">
    <property type="entry name" value="GroEL equatorial domain-like"/>
    <property type="match status" value="1"/>
</dbReference>
<dbReference type="SUPFAM" id="SSF54849">
    <property type="entry name" value="GroEL-intermediate domain like"/>
    <property type="match status" value="1"/>
</dbReference>
<dbReference type="PROSITE" id="PS00750">
    <property type="entry name" value="TCP1_1"/>
    <property type="match status" value="1"/>
</dbReference>
<dbReference type="PROSITE" id="PS00751">
    <property type="entry name" value="TCP1_2"/>
    <property type="match status" value="1"/>
</dbReference>
<dbReference type="PROSITE" id="PS00995">
    <property type="entry name" value="TCP1_3"/>
    <property type="match status" value="1"/>
</dbReference>
<accession>P49368</accession>
<accession>A6NE14</accession>
<accession>Q5SZY1</accession>
<accession>Q9BR64</accession>
<protein>
    <recommendedName>
        <fullName>T-complex protein 1 subunit gamma</fullName>
        <shortName>TCP-1-gamma</shortName>
        <ecNumber evidence="15 16 17">3.6.1.-</ecNumber>
    </recommendedName>
    <alternativeName>
        <fullName>CCT-gamma</fullName>
    </alternativeName>
    <alternativeName>
        <fullName>Chaperonin containing T-complex polypeptide 1 subunit 3</fullName>
    </alternativeName>
    <alternativeName>
        <fullName>hTRiC5</fullName>
    </alternativeName>
</protein>
<feature type="chain" id="PRO_0000128321" description="T-complex protein 1 subunit gamma">
    <location>
        <begin position="1"/>
        <end position="545"/>
    </location>
</feature>
<feature type="region of interest" description="Disordered" evidence="3">
    <location>
        <begin position="1"/>
        <end position="24"/>
    </location>
</feature>
<feature type="region of interest" description="Disordered" evidence="3">
    <location>
        <begin position="526"/>
        <end position="545"/>
    </location>
</feature>
<feature type="binding site" evidence="8 9 18 19 20 21 22 24 25">
    <location>
        <position position="42"/>
    </location>
    <ligand>
        <name>ADP</name>
        <dbReference type="ChEBI" id="CHEBI:456216"/>
    </ligand>
</feature>
<feature type="binding site" evidence="10 31">
    <location>
        <position position="42"/>
    </location>
    <ligand>
        <name>ATP</name>
        <dbReference type="ChEBI" id="CHEBI:30616"/>
    </ligand>
</feature>
<feature type="binding site" evidence="8 9 10 18 19 20 21 22 23 24 25 29 30">
    <location>
        <position position="93"/>
    </location>
    <ligand>
        <name>Mg(2+)</name>
        <dbReference type="ChEBI" id="CHEBI:18420"/>
    </ligand>
</feature>
<feature type="binding site" evidence="8 9 10 18 19 21 23 24 25 27 29">
    <location>
        <position position="94"/>
    </location>
    <ligand>
        <name>ADP</name>
        <dbReference type="ChEBI" id="CHEBI:456216"/>
    </ligand>
</feature>
<feature type="binding site" evidence="10 31">
    <location>
        <position position="94"/>
    </location>
    <ligand>
        <name>ATP</name>
        <dbReference type="ChEBI" id="CHEBI:30616"/>
    </ligand>
</feature>
<feature type="binding site" evidence="8 9 10 19 21 23 24 29 30">
    <location>
        <position position="95"/>
    </location>
    <ligand>
        <name>ADP</name>
        <dbReference type="ChEBI" id="CHEBI:456216"/>
    </ligand>
</feature>
<feature type="binding site" evidence="10 31">
    <location>
        <position position="95"/>
    </location>
    <ligand>
        <name>ATP</name>
        <dbReference type="ChEBI" id="CHEBI:30616"/>
    </ligand>
</feature>
<feature type="binding site" evidence="8 9 10 18 23 25 27 29 30">
    <location>
        <position position="96"/>
    </location>
    <ligand>
        <name>ADP</name>
        <dbReference type="ChEBI" id="CHEBI:456216"/>
    </ligand>
</feature>
<feature type="binding site" evidence="10 31">
    <location>
        <position position="96"/>
    </location>
    <ligand>
        <name>ATP</name>
        <dbReference type="ChEBI" id="CHEBI:30616"/>
    </ligand>
</feature>
<feature type="binding site" evidence="8 9 18 19 20 21 22 23 24 25">
    <location>
        <position position="97"/>
    </location>
    <ligand>
        <name>ADP</name>
        <dbReference type="ChEBI" id="CHEBI:456216"/>
    </ligand>
</feature>
<feature type="binding site" evidence="8 9 10 18 19 20 22 23 24 25 30">
    <location>
        <position position="162"/>
    </location>
    <ligand>
        <name>ADP</name>
        <dbReference type="ChEBI" id="CHEBI:456216"/>
    </ligand>
</feature>
<feature type="binding site" evidence="8 18 20">
    <location>
        <position position="163"/>
    </location>
    <ligand>
        <name>ADP</name>
        <dbReference type="ChEBI" id="CHEBI:456216"/>
    </ligand>
</feature>
<feature type="binding site" evidence="8 9 10 18 19 20 21 22 23 24 25 27 29 30">
    <location>
        <position position="411"/>
    </location>
    <ligand>
        <name>ADP</name>
        <dbReference type="ChEBI" id="CHEBI:456216"/>
    </ligand>
</feature>
<feature type="binding site" evidence="10 31">
    <location>
        <position position="411"/>
    </location>
    <ligand>
        <name>ATP</name>
        <dbReference type="ChEBI" id="CHEBI:30616"/>
    </ligand>
</feature>
<feature type="binding site" evidence="9 10 22 27 29 30">
    <location>
        <position position="482"/>
    </location>
    <ligand>
        <name>ADP</name>
        <dbReference type="ChEBI" id="CHEBI:456216"/>
    </ligand>
</feature>
<feature type="binding site" evidence="10 31">
    <location>
        <position position="482"/>
    </location>
    <ligand>
        <name>ATP</name>
        <dbReference type="ChEBI" id="CHEBI:30616"/>
    </ligand>
</feature>
<feature type="binding site" evidence="8 9 10 19 20 22 25 27">
    <location>
        <position position="483"/>
    </location>
    <ligand>
        <name>ADP</name>
        <dbReference type="ChEBI" id="CHEBI:456216"/>
    </ligand>
</feature>
<feature type="binding site" evidence="8 10 18 19 27 29 30">
    <location>
        <position position="497"/>
    </location>
    <ligand>
        <name>ADP</name>
        <dbReference type="ChEBI" id="CHEBI:456216"/>
    </ligand>
</feature>
<feature type="binding site" evidence="10 31">
    <location>
        <position position="497"/>
    </location>
    <ligand>
        <name>ATP</name>
        <dbReference type="ChEBI" id="CHEBI:30616"/>
    </ligand>
</feature>
<feature type="binding site" evidence="8 20">
    <location>
        <position position="502"/>
    </location>
    <ligand>
        <name>ADP</name>
        <dbReference type="ChEBI" id="CHEBI:456216"/>
    </ligand>
</feature>
<feature type="modified residue" description="N-acetylmethionine" evidence="12 35">
    <location>
        <position position="1"/>
    </location>
</feature>
<feature type="modified residue" description="Phosphoserine" evidence="39">
    <location>
        <position position="11"/>
    </location>
</feature>
<feature type="modified residue" description="Phosphoserine" evidence="2">
    <location>
        <position position="170"/>
    </location>
</feature>
<feature type="modified residue" description="N6-acetyllysine" evidence="36">
    <location>
        <position position="222"/>
    </location>
</feature>
<feature type="modified residue" description="Phosphoserine" evidence="39">
    <location>
        <position position="243"/>
    </location>
</feature>
<feature type="modified residue" description="Phosphoserine" evidence="37">
    <location>
        <position position="244"/>
    </location>
</feature>
<feature type="modified residue" description="Phosphotyrosine" evidence="39">
    <location>
        <position position="247"/>
    </location>
</feature>
<feature type="modified residue" description="Phosphoserine" evidence="38 39 40">
    <location>
        <position position="252"/>
    </location>
</feature>
<feature type="modified residue" description="Phosphothreonine" evidence="39">
    <location>
        <position position="430"/>
    </location>
</feature>
<feature type="modified residue" description="Phosphothreonine" evidence="39">
    <location>
        <position position="459"/>
    </location>
</feature>
<feature type="disulfide bond" evidence="1">
    <location>
        <begin position="366"/>
        <end position="372"/>
    </location>
</feature>
<feature type="cross-link" description="Glycyl lysine isopeptide (Lys-Gly) (interchain with G-Cter in SUMO2)" evidence="42">
    <location>
        <position position="15"/>
    </location>
</feature>
<feature type="cross-link" description="Glycyl lysine isopeptide (Lys-Gly) (interchain with G-Cter in SUMO2)" evidence="42">
    <location>
        <position position="248"/>
    </location>
</feature>
<feature type="cross-link" description="Glycyl lysine isopeptide (Lys-Gly) (interchain with G-Cter in SUMO2)" evidence="42">
    <location>
        <position position="249"/>
    </location>
</feature>
<feature type="cross-link" description="Glycyl lysine isopeptide (Lys-Gly) (interchain with G-Cter in SUMO2)" evidence="41">
    <location>
        <position position="381"/>
    </location>
</feature>
<feature type="splice variant" id="VSP_042026" description="In isoform 2." evidence="13">
    <location>
        <begin position="32"/>
        <end position="69"/>
    </location>
</feature>
<feature type="sequence variant" id="VAR_090329" description="In NEDSVH; uncertain significance; the orthologous mutation in C. elegans results in reduced worm motility and a crawling speed defect suggesting a deleterious effect on function." evidence="11">
    <original>Q</original>
    <variation>R</variation>
    <location>
        <position position="12"/>
    </location>
</feature>
<feature type="sequence variant" id="VAR_052265" description="In dbSNP:rs2230194.">
    <original>L</original>
    <variation>F</variation>
    <location>
        <position position="391"/>
    </location>
</feature>
<feature type="sequence variant" id="VAR_090330" description="In NEDSVH; likely pathogenic; the orthologous yeast mutation induces yeast lethality suggesting loss of function." evidence="11">
    <location>
        <begin position="518"/>
        <end position="545"/>
    </location>
</feature>
<feature type="sequence conflict" description="In Ref. 6; CAA52808." evidence="14" ref="6">
    <original>E</original>
    <variation>G</variation>
    <location>
        <position position="251"/>
    </location>
</feature>
<feature type="sequence conflict" description="In Ref. 8; AAC50068." evidence="14" ref="8">
    <original>T</original>
    <variation>A</variation>
    <location>
        <position position="345"/>
    </location>
</feature>
<feature type="strand" evidence="45">
    <location>
        <begin position="10"/>
        <end position="13"/>
    </location>
</feature>
<feature type="strand" evidence="49">
    <location>
        <begin position="15"/>
        <end position="17"/>
    </location>
</feature>
<feature type="helix" evidence="43">
    <location>
        <begin position="20"/>
        <end position="37"/>
    </location>
</feature>
<feature type="helix" evidence="43">
    <location>
        <begin position="38"/>
        <end position="40"/>
    </location>
</feature>
<feature type="strand" evidence="47">
    <location>
        <begin position="42"/>
        <end position="44"/>
    </location>
</feature>
<feature type="strand" evidence="43">
    <location>
        <begin position="47"/>
        <end position="51"/>
    </location>
</feature>
<feature type="strand" evidence="47">
    <location>
        <begin position="53"/>
        <end position="55"/>
    </location>
</feature>
<feature type="strand" evidence="43">
    <location>
        <begin position="57"/>
        <end position="60"/>
    </location>
</feature>
<feature type="helix" evidence="43">
    <location>
        <begin position="63"/>
        <end position="69"/>
    </location>
</feature>
<feature type="helix" evidence="43">
    <location>
        <begin position="75"/>
        <end position="90"/>
    </location>
</feature>
<feature type="strand" evidence="46">
    <location>
        <begin position="92"/>
        <end position="94"/>
    </location>
</feature>
<feature type="helix" evidence="43">
    <location>
        <begin position="97"/>
        <end position="114"/>
    </location>
</feature>
<feature type="helix" evidence="43">
    <location>
        <begin position="119"/>
        <end position="140"/>
    </location>
</feature>
<feature type="helix" evidence="43">
    <location>
        <begin position="149"/>
        <end position="160"/>
    </location>
</feature>
<feature type="strand" evidence="45">
    <location>
        <begin position="161"/>
        <end position="163"/>
    </location>
</feature>
<feature type="helix" evidence="43">
    <location>
        <begin position="164"/>
        <end position="168"/>
    </location>
</feature>
<feature type="helix" evidence="43">
    <location>
        <begin position="169"/>
        <end position="183"/>
    </location>
</feature>
<feature type="strand" evidence="43">
    <location>
        <begin position="184"/>
        <end position="189"/>
    </location>
</feature>
<feature type="strand" evidence="43">
    <location>
        <begin position="191"/>
        <end position="193"/>
    </location>
</feature>
<feature type="turn" evidence="43">
    <location>
        <begin position="195"/>
        <end position="197"/>
    </location>
</feature>
<feature type="strand" evidence="43">
    <location>
        <begin position="198"/>
        <end position="207"/>
    </location>
</feature>
<feature type="helix" evidence="43">
    <location>
        <begin position="209"/>
        <end position="211"/>
    </location>
</feature>
<feature type="strand" evidence="43">
    <location>
        <begin position="213"/>
        <end position="217"/>
    </location>
</feature>
<feature type="strand" evidence="43">
    <location>
        <begin position="219"/>
        <end position="221"/>
    </location>
</feature>
<feature type="strand" evidence="50">
    <location>
        <begin position="224"/>
        <end position="226"/>
    </location>
</feature>
<feature type="strand" evidence="43">
    <location>
        <begin position="231"/>
        <end position="235"/>
    </location>
</feature>
<feature type="strand" evidence="43">
    <location>
        <begin position="238"/>
        <end position="243"/>
    </location>
</feature>
<feature type="strand" evidence="47">
    <location>
        <begin position="250"/>
        <end position="253"/>
    </location>
</feature>
<feature type="strand" evidence="49">
    <location>
        <begin position="254"/>
        <end position="256"/>
    </location>
</feature>
<feature type="strand" evidence="44">
    <location>
        <begin position="260"/>
        <end position="262"/>
    </location>
</feature>
<feature type="helix" evidence="43">
    <location>
        <begin position="263"/>
        <end position="283"/>
    </location>
</feature>
<feature type="strand" evidence="43">
    <location>
        <begin position="288"/>
        <end position="294"/>
    </location>
</feature>
<feature type="helix" evidence="43">
    <location>
        <begin position="298"/>
        <end position="306"/>
    </location>
</feature>
<feature type="strand" evidence="43">
    <location>
        <begin position="310"/>
        <end position="312"/>
    </location>
</feature>
<feature type="helix" evidence="43">
    <location>
        <begin position="317"/>
        <end position="327"/>
    </location>
</feature>
<feature type="strand" evidence="45">
    <location>
        <begin position="331"/>
        <end position="333"/>
    </location>
</feature>
<feature type="helix" evidence="43">
    <location>
        <begin position="335"/>
        <end position="337"/>
    </location>
</feature>
<feature type="helix" evidence="43">
    <location>
        <begin position="340"/>
        <end position="342"/>
    </location>
</feature>
<feature type="strand" evidence="43">
    <location>
        <begin position="350"/>
        <end position="355"/>
    </location>
</feature>
<feature type="strand" evidence="43">
    <location>
        <begin position="358"/>
        <end position="362"/>
    </location>
</feature>
<feature type="strand" evidence="48">
    <location>
        <begin position="366"/>
        <end position="368"/>
    </location>
</feature>
<feature type="strand" evidence="43">
    <location>
        <begin position="372"/>
        <end position="379"/>
    </location>
</feature>
<feature type="helix" evidence="43">
    <location>
        <begin position="381"/>
        <end position="403"/>
    </location>
</feature>
<feature type="strand" evidence="43">
    <location>
        <begin position="407"/>
        <end position="409"/>
    </location>
</feature>
<feature type="turn" evidence="43">
    <location>
        <begin position="410"/>
        <end position="412"/>
    </location>
</feature>
<feature type="helix" evidence="43">
    <location>
        <begin position="413"/>
        <end position="426"/>
    </location>
</feature>
<feature type="helix" evidence="43">
    <location>
        <begin position="434"/>
        <end position="443"/>
    </location>
</feature>
<feature type="helix" evidence="43">
    <location>
        <begin position="446"/>
        <end position="455"/>
    </location>
</feature>
<feature type="helix" evidence="43">
    <location>
        <begin position="459"/>
        <end position="469"/>
    </location>
</feature>
<feature type="strand" evidence="43">
    <location>
        <begin position="472"/>
        <end position="474"/>
    </location>
</feature>
<feature type="strand" evidence="43">
    <location>
        <begin position="478"/>
        <end position="480"/>
    </location>
</feature>
<feature type="turn" evidence="43">
    <location>
        <begin position="482"/>
        <end position="484"/>
    </location>
</feature>
<feature type="strand" evidence="43">
    <location>
        <begin position="487"/>
        <end position="489"/>
    </location>
</feature>
<feature type="helix" evidence="43">
    <location>
        <begin position="490"/>
        <end position="493"/>
    </location>
</feature>
<feature type="strand" evidence="43">
    <location>
        <begin position="496"/>
        <end position="498"/>
    </location>
</feature>
<feature type="helix" evidence="43">
    <location>
        <begin position="499"/>
        <end position="518"/>
    </location>
</feature>
<feature type="strand" evidence="43">
    <location>
        <begin position="519"/>
        <end position="524"/>
    </location>
</feature>
<sequence>MMGHRPVLVLSQNTKRESGRKVQSGNINAAKTIADIIRTCLGPKSMMKMLLDPMGGIVMTNDGNAILREIQVQHPAAKSMIEISRTQDEEVGDGTTSVIILAGEMLSVAEHFLEQQMHPTVVISAYRKALDDMISTLKKISIPVDISDSDMMLNIINSSITTKAISRWSSLACNIALDAVKMVQFEENGRKEIDIKKYARVEKIPGGIIEDSCVLRGVMINKDVTHPRMRRYIKNPRIVLLDSSLEYKKGESQTDIEITREEDFTRILQMEEEYIQQLCEDIIQLKPDVVITEKGISDLAQHYLMRANITAIRRVRKTDNNRIARACGARIVSRPEELREDDVGTGAGLLEIKKIGDEYFTFITDCKDPKACTILLRGASKEILSEVERNLQDAMQVCRNVLLDPQLVPGGGASEMAVAHALTEKSKAMTGVEQWPYRAVAQALEVIPRTLIQNCGASTIRLLTSLRAKHTQENCETWGVNGETGTLVDMKELGIWEPLAVKLQTYKTAVETAVLLLRIDDIVSGHKKKGDDQSRQGGAPDAGQE</sequence>
<name>TCPG_HUMAN</name>